<dbReference type="EC" id="5.3.1.1" evidence="1"/>
<dbReference type="EMBL" id="CP000512">
    <property type="protein sequence ID" value="ABM31852.1"/>
    <property type="molecule type" value="Genomic_DNA"/>
</dbReference>
<dbReference type="RefSeq" id="WP_011794404.1">
    <property type="nucleotide sequence ID" value="NC_008752.1"/>
</dbReference>
<dbReference type="SMR" id="A1TLL4"/>
<dbReference type="STRING" id="397945.Aave_1261"/>
<dbReference type="GeneID" id="79790923"/>
<dbReference type="KEGG" id="aav:Aave_1261"/>
<dbReference type="eggNOG" id="COG0149">
    <property type="taxonomic scope" value="Bacteria"/>
</dbReference>
<dbReference type="HOGENOM" id="CLU_024251_2_1_4"/>
<dbReference type="OrthoDB" id="9809429at2"/>
<dbReference type="UniPathway" id="UPA00109">
    <property type="reaction ID" value="UER00189"/>
</dbReference>
<dbReference type="UniPathway" id="UPA00138"/>
<dbReference type="Proteomes" id="UP000002596">
    <property type="component" value="Chromosome"/>
</dbReference>
<dbReference type="GO" id="GO:0005829">
    <property type="term" value="C:cytosol"/>
    <property type="evidence" value="ECO:0007669"/>
    <property type="project" value="TreeGrafter"/>
</dbReference>
<dbReference type="GO" id="GO:0004807">
    <property type="term" value="F:triose-phosphate isomerase activity"/>
    <property type="evidence" value="ECO:0007669"/>
    <property type="project" value="UniProtKB-UniRule"/>
</dbReference>
<dbReference type="GO" id="GO:0006094">
    <property type="term" value="P:gluconeogenesis"/>
    <property type="evidence" value="ECO:0007669"/>
    <property type="project" value="UniProtKB-UniRule"/>
</dbReference>
<dbReference type="GO" id="GO:0046166">
    <property type="term" value="P:glyceraldehyde-3-phosphate biosynthetic process"/>
    <property type="evidence" value="ECO:0007669"/>
    <property type="project" value="TreeGrafter"/>
</dbReference>
<dbReference type="GO" id="GO:0019563">
    <property type="term" value="P:glycerol catabolic process"/>
    <property type="evidence" value="ECO:0007669"/>
    <property type="project" value="TreeGrafter"/>
</dbReference>
<dbReference type="GO" id="GO:0006096">
    <property type="term" value="P:glycolytic process"/>
    <property type="evidence" value="ECO:0007669"/>
    <property type="project" value="UniProtKB-UniRule"/>
</dbReference>
<dbReference type="CDD" id="cd00311">
    <property type="entry name" value="TIM"/>
    <property type="match status" value="1"/>
</dbReference>
<dbReference type="FunFam" id="3.20.20.70:FF:000016">
    <property type="entry name" value="Triosephosphate isomerase"/>
    <property type="match status" value="1"/>
</dbReference>
<dbReference type="Gene3D" id="3.20.20.70">
    <property type="entry name" value="Aldolase class I"/>
    <property type="match status" value="1"/>
</dbReference>
<dbReference type="HAMAP" id="MF_00147_B">
    <property type="entry name" value="TIM_B"/>
    <property type="match status" value="1"/>
</dbReference>
<dbReference type="InterPro" id="IPR013785">
    <property type="entry name" value="Aldolase_TIM"/>
</dbReference>
<dbReference type="InterPro" id="IPR035990">
    <property type="entry name" value="TIM_sf"/>
</dbReference>
<dbReference type="InterPro" id="IPR022896">
    <property type="entry name" value="TrioseP_Isoase_bac/euk"/>
</dbReference>
<dbReference type="InterPro" id="IPR000652">
    <property type="entry name" value="Triosephosphate_isomerase"/>
</dbReference>
<dbReference type="InterPro" id="IPR020861">
    <property type="entry name" value="Triosephosphate_isomerase_AS"/>
</dbReference>
<dbReference type="NCBIfam" id="TIGR00419">
    <property type="entry name" value="tim"/>
    <property type="match status" value="1"/>
</dbReference>
<dbReference type="PANTHER" id="PTHR21139">
    <property type="entry name" value="TRIOSEPHOSPHATE ISOMERASE"/>
    <property type="match status" value="1"/>
</dbReference>
<dbReference type="PANTHER" id="PTHR21139:SF42">
    <property type="entry name" value="TRIOSEPHOSPHATE ISOMERASE"/>
    <property type="match status" value="1"/>
</dbReference>
<dbReference type="Pfam" id="PF00121">
    <property type="entry name" value="TIM"/>
    <property type="match status" value="1"/>
</dbReference>
<dbReference type="SUPFAM" id="SSF51351">
    <property type="entry name" value="Triosephosphate isomerase (TIM)"/>
    <property type="match status" value="1"/>
</dbReference>
<dbReference type="PROSITE" id="PS00171">
    <property type="entry name" value="TIM_1"/>
    <property type="match status" value="1"/>
</dbReference>
<dbReference type="PROSITE" id="PS51440">
    <property type="entry name" value="TIM_2"/>
    <property type="match status" value="1"/>
</dbReference>
<organism>
    <name type="scientific">Paracidovorax citrulli (strain AAC00-1)</name>
    <name type="common">Acidovorax citrulli</name>
    <dbReference type="NCBI Taxonomy" id="397945"/>
    <lineage>
        <taxon>Bacteria</taxon>
        <taxon>Pseudomonadati</taxon>
        <taxon>Pseudomonadota</taxon>
        <taxon>Betaproteobacteria</taxon>
        <taxon>Burkholderiales</taxon>
        <taxon>Comamonadaceae</taxon>
        <taxon>Paracidovorax</taxon>
    </lineage>
</organism>
<feature type="chain" id="PRO_0000307418" description="Triosephosphate isomerase">
    <location>
        <begin position="1"/>
        <end position="251"/>
    </location>
</feature>
<feature type="active site" description="Electrophile" evidence="1">
    <location>
        <position position="98"/>
    </location>
</feature>
<feature type="active site" description="Proton acceptor" evidence="1">
    <location>
        <position position="169"/>
    </location>
</feature>
<feature type="binding site" evidence="1">
    <location>
        <begin position="10"/>
        <end position="12"/>
    </location>
    <ligand>
        <name>substrate</name>
    </ligand>
</feature>
<feature type="binding site" evidence="1">
    <location>
        <position position="175"/>
    </location>
    <ligand>
        <name>substrate</name>
    </ligand>
</feature>
<feature type="binding site" evidence="1">
    <location>
        <position position="213"/>
    </location>
    <ligand>
        <name>substrate</name>
    </ligand>
</feature>
<feature type="binding site" evidence="1">
    <location>
        <begin position="234"/>
        <end position="235"/>
    </location>
    <ligand>
        <name>substrate</name>
    </ligand>
</feature>
<evidence type="ECO:0000255" key="1">
    <source>
        <dbReference type="HAMAP-Rule" id="MF_00147"/>
    </source>
</evidence>
<protein>
    <recommendedName>
        <fullName evidence="1">Triosephosphate isomerase</fullName>
        <shortName evidence="1">TIM</shortName>
        <shortName evidence="1">TPI</shortName>
        <ecNumber evidence="1">5.3.1.1</ecNumber>
    </recommendedName>
    <alternativeName>
        <fullName evidence="1">Triose-phosphate isomerase</fullName>
    </alternativeName>
</protein>
<reference key="1">
    <citation type="submission" date="2006-12" db="EMBL/GenBank/DDBJ databases">
        <title>Complete sequence of Acidovorax avenae subsp. citrulli AAC00-1.</title>
        <authorList>
            <person name="Copeland A."/>
            <person name="Lucas S."/>
            <person name="Lapidus A."/>
            <person name="Barry K."/>
            <person name="Detter J.C."/>
            <person name="Glavina del Rio T."/>
            <person name="Dalin E."/>
            <person name="Tice H."/>
            <person name="Pitluck S."/>
            <person name="Kiss H."/>
            <person name="Brettin T."/>
            <person name="Bruce D."/>
            <person name="Han C."/>
            <person name="Tapia R."/>
            <person name="Gilna P."/>
            <person name="Schmutz J."/>
            <person name="Larimer F."/>
            <person name="Land M."/>
            <person name="Hauser L."/>
            <person name="Kyrpides N."/>
            <person name="Kim E."/>
            <person name="Stahl D."/>
            <person name="Richardson P."/>
        </authorList>
    </citation>
    <scope>NUCLEOTIDE SEQUENCE [LARGE SCALE GENOMIC DNA]</scope>
    <source>
        <strain>AAC00-1</strain>
    </source>
</reference>
<accession>A1TLL4</accession>
<comment type="function">
    <text evidence="1">Involved in the gluconeogenesis. Catalyzes stereospecifically the conversion of dihydroxyacetone phosphate (DHAP) to D-glyceraldehyde-3-phosphate (G3P).</text>
</comment>
<comment type="catalytic activity">
    <reaction evidence="1">
        <text>D-glyceraldehyde 3-phosphate = dihydroxyacetone phosphate</text>
        <dbReference type="Rhea" id="RHEA:18585"/>
        <dbReference type="ChEBI" id="CHEBI:57642"/>
        <dbReference type="ChEBI" id="CHEBI:59776"/>
        <dbReference type="EC" id="5.3.1.1"/>
    </reaction>
</comment>
<comment type="pathway">
    <text evidence="1">Carbohydrate biosynthesis; gluconeogenesis.</text>
</comment>
<comment type="pathway">
    <text evidence="1">Carbohydrate degradation; glycolysis; D-glyceraldehyde 3-phosphate from glycerone phosphate: step 1/1.</text>
</comment>
<comment type="subunit">
    <text evidence="1">Homodimer.</text>
</comment>
<comment type="subcellular location">
    <subcellularLocation>
        <location evidence="1">Cytoplasm</location>
    </subcellularLocation>
</comment>
<comment type="similarity">
    <text evidence="1">Belongs to the triosephosphate isomerase family.</text>
</comment>
<sequence length="251" mass="26039">MTKKKLIAGNWKMNGTLGANAALLQALRGGLEAGAYQNVDVAVAVPAAYLAQVQGLVEGSAIALAAQDVSRHEAGAYTGEVSAAMLQEFGVRYVLVGHSERRQYHGETDEQVAEKAQRALAAGITPVVCVGETLAEREAGQTEAVVKRQLAAVIHLNGHCISETVVAYEPVWAIGTGRTATPEQAQQVHAVLRAQLAAASEHADRIRLLYGGSMNAANAAALLAQPDIDGGLVGGASLKAQDFLQIIAAAA</sequence>
<proteinExistence type="inferred from homology"/>
<name>TPIS_PARC0</name>
<keyword id="KW-0963">Cytoplasm</keyword>
<keyword id="KW-0312">Gluconeogenesis</keyword>
<keyword id="KW-0324">Glycolysis</keyword>
<keyword id="KW-0413">Isomerase</keyword>
<gene>
    <name evidence="1" type="primary">tpiA</name>
    <name type="ordered locus">Aave_1261</name>
</gene>